<sequence length="177" mass="18927">MSRVAKAPVVIPAGVEVKLNGQVISIKGKNGELTRTVHSAVEVKQEENTLTFAPREGAVDGWAQAGTTRALLNSMVIGVTEGFTKKLQLVGVGYRAAVKGNVVNLALGFSHPVDHELPAGITAECPTQTEIVLKGADKQVIGQVAADLRAYRRPEPYKGKGVRYADEVVRTKEAKKK</sequence>
<dbReference type="EMBL" id="BX936398">
    <property type="protein sequence ID" value="CAH22921.1"/>
    <property type="molecule type" value="Genomic_DNA"/>
</dbReference>
<dbReference type="RefSeq" id="WP_002213334.1">
    <property type="nucleotide sequence ID" value="NZ_CP009712.1"/>
</dbReference>
<dbReference type="SMR" id="Q664T6"/>
<dbReference type="GeneID" id="96663181"/>
<dbReference type="KEGG" id="ypo:BZ17_2904"/>
<dbReference type="KEGG" id="yps:YPTB3683"/>
<dbReference type="PATRIC" id="fig|273123.14.peg.3045"/>
<dbReference type="Proteomes" id="UP000001011">
    <property type="component" value="Chromosome"/>
</dbReference>
<dbReference type="GO" id="GO:0022625">
    <property type="term" value="C:cytosolic large ribosomal subunit"/>
    <property type="evidence" value="ECO:0007669"/>
    <property type="project" value="TreeGrafter"/>
</dbReference>
<dbReference type="GO" id="GO:0019843">
    <property type="term" value="F:rRNA binding"/>
    <property type="evidence" value="ECO:0007669"/>
    <property type="project" value="UniProtKB-UniRule"/>
</dbReference>
<dbReference type="GO" id="GO:0003735">
    <property type="term" value="F:structural constituent of ribosome"/>
    <property type="evidence" value="ECO:0007669"/>
    <property type="project" value="InterPro"/>
</dbReference>
<dbReference type="GO" id="GO:0002181">
    <property type="term" value="P:cytoplasmic translation"/>
    <property type="evidence" value="ECO:0007669"/>
    <property type="project" value="TreeGrafter"/>
</dbReference>
<dbReference type="FunFam" id="3.90.930.12:FF:000001">
    <property type="entry name" value="50S ribosomal protein L6"/>
    <property type="match status" value="1"/>
</dbReference>
<dbReference type="FunFam" id="3.90.930.12:FF:000002">
    <property type="entry name" value="50S ribosomal protein L6"/>
    <property type="match status" value="1"/>
</dbReference>
<dbReference type="Gene3D" id="3.90.930.12">
    <property type="entry name" value="Ribosomal protein L6, alpha-beta domain"/>
    <property type="match status" value="2"/>
</dbReference>
<dbReference type="HAMAP" id="MF_01365_B">
    <property type="entry name" value="Ribosomal_uL6_B"/>
    <property type="match status" value="1"/>
</dbReference>
<dbReference type="InterPro" id="IPR000702">
    <property type="entry name" value="Ribosomal_uL6-like"/>
</dbReference>
<dbReference type="InterPro" id="IPR036789">
    <property type="entry name" value="Ribosomal_uL6-like_a/b-dom_sf"/>
</dbReference>
<dbReference type="InterPro" id="IPR020040">
    <property type="entry name" value="Ribosomal_uL6_a/b-dom"/>
</dbReference>
<dbReference type="InterPro" id="IPR019906">
    <property type="entry name" value="Ribosomal_uL6_bac-type"/>
</dbReference>
<dbReference type="InterPro" id="IPR002358">
    <property type="entry name" value="Ribosomal_uL6_CS"/>
</dbReference>
<dbReference type="NCBIfam" id="TIGR03654">
    <property type="entry name" value="L6_bact"/>
    <property type="match status" value="1"/>
</dbReference>
<dbReference type="PANTHER" id="PTHR11655">
    <property type="entry name" value="60S/50S RIBOSOMAL PROTEIN L6/L9"/>
    <property type="match status" value="1"/>
</dbReference>
<dbReference type="PANTHER" id="PTHR11655:SF14">
    <property type="entry name" value="LARGE RIBOSOMAL SUBUNIT PROTEIN UL6M"/>
    <property type="match status" value="1"/>
</dbReference>
<dbReference type="Pfam" id="PF00347">
    <property type="entry name" value="Ribosomal_L6"/>
    <property type="match status" value="2"/>
</dbReference>
<dbReference type="PIRSF" id="PIRSF002162">
    <property type="entry name" value="Ribosomal_L6"/>
    <property type="match status" value="1"/>
</dbReference>
<dbReference type="PRINTS" id="PR00059">
    <property type="entry name" value="RIBOSOMALL6"/>
</dbReference>
<dbReference type="SUPFAM" id="SSF56053">
    <property type="entry name" value="Ribosomal protein L6"/>
    <property type="match status" value="2"/>
</dbReference>
<dbReference type="PROSITE" id="PS00525">
    <property type="entry name" value="RIBOSOMAL_L6_1"/>
    <property type="match status" value="1"/>
</dbReference>
<evidence type="ECO:0000255" key="1">
    <source>
        <dbReference type="HAMAP-Rule" id="MF_01365"/>
    </source>
</evidence>
<evidence type="ECO:0000305" key="2"/>
<proteinExistence type="inferred from homology"/>
<organism>
    <name type="scientific">Yersinia pseudotuberculosis serotype I (strain IP32953)</name>
    <dbReference type="NCBI Taxonomy" id="273123"/>
    <lineage>
        <taxon>Bacteria</taxon>
        <taxon>Pseudomonadati</taxon>
        <taxon>Pseudomonadota</taxon>
        <taxon>Gammaproteobacteria</taxon>
        <taxon>Enterobacterales</taxon>
        <taxon>Yersiniaceae</taxon>
        <taxon>Yersinia</taxon>
    </lineage>
</organism>
<gene>
    <name evidence="1" type="primary">rplF</name>
    <name type="ordered locus">YPTB3683</name>
</gene>
<reference key="1">
    <citation type="journal article" date="2004" name="Proc. Natl. Acad. Sci. U.S.A.">
        <title>Insights into the evolution of Yersinia pestis through whole-genome comparison with Yersinia pseudotuberculosis.</title>
        <authorList>
            <person name="Chain P.S.G."/>
            <person name="Carniel E."/>
            <person name="Larimer F.W."/>
            <person name="Lamerdin J."/>
            <person name="Stoutland P.O."/>
            <person name="Regala W.M."/>
            <person name="Georgescu A.M."/>
            <person name="Vergez L.M."/>
            <person name="Land M.L."/>
            <person name="Motin V.L."/>
            <person name="Brubaker R.R."/>
            <person name="Fowler J."/>
            <person name="Hinnebusch J."/>
            <person name="Marceau M."/>
            <person name="Medigue C."/>
            <person name="Simonet M."/>
            <person name="Chenal-Francisque V."/>
            <person name="Souza B."/>
            <person name="Dacheux D."/>
            <person name="Elliott J.M."/>
            <person name="Derbise A."/>
            <person name="Hauser L.J."/>
            <person name="Garcia E."/>
        </authorList>
    </citation>
    <scope>NUCLEOTIDE SEQUENCE [LARGE SCALE GENOMIC DNA]</scope>
    <source>
        <strain>IP32953</strain>
    </source>
</reference>
<feature type="chain" id="PRO_0000265316" description="Large ribosomal subunit protein uL6">
    <location>
        <begin position="1"/>
        <end position="177"/>
    </location>
</feature>
<name>RL6_YERPS</name>
<keyword id="KW-0687">Ribonucleoprotein</keyword>
<keyword id="KW-0689">Ribosomal protein</keyword>
<keyword id="KW-0694">RNA-binding</keyword>
<keyword id="KW-0699">rRNA-binding</keyword>
<accession>Q664T6</accession>
<comment type="function">
    <text evidence="1">This protein binds to the 23S rRNA, and is important in its secondary structure. It is located near the subunit interface in the base of the L7/L12 stalk, and near the tRNA binding site of the peptidyltransferase center.</text>
</comment>
<comment type="subunit">
    <text evidence="1">Part of the 50S ribosomal subunit.</text>
</comment>
<comment type="similarity">
    <text evidence="1">Belongs to the universal ribosomal protein uL6 family.</text>
</comment>
<protein>
    <recommendedName>
        <fullName evidence="1">Large ribosomal subunit protein uL6</fullName>
    </recommendedName>
    <alternativeName>
        <fullName evidence="2">50S ribosomal protein L6</fullName>
    </alternativeName>
</protein>